<organism>
    <name type="scientific">Ruminiclostridium cellulolyticum (strain ATCC 35319 / DSM 5812 / JCM 6584 / H10)</name>
    <name type="common">Clostridium cellulolyticum</name>
    <dbReference type="NCBI Taxonomy" id="394503"/>
    <lineage>
        <taxon>Bacteria</taxon>
        <taxon>Bacillati</taxon>
        <taxon>Bacillota</taxon>
        <taxon>Clostridia</taxon>
        <taxon>Eubacteriales</taxon>
        <taxon>Oscillospiraceae</taxon>
        <taxon>Ruminiclostridium</taxon>
    </lineage>
</organism>
<gene>
    <name evidence="1" type="primary">sfsA</name>
    <name type="ordered locus">Ccel_3473</name>
</gene>
<evidence type="ECO:0000255" key="1">
    <source>
        <dbReference type="HAMAP-Rule" id="MF_00095"/>
    </source>
</evidence>
<feature type="chain" id="PRO_1000196964" description="Sugar fermentation stimulation protein homolog">
    <location>
        <begin position="1"/>
        <end position="226"/>
    </location>
</feature>
<sequence>MKYKNIKRGIFIERPNRFIAHVEIDSVTEICHVKNTGRCKELLIPGTVVYIQKSDNPKRKTGFDLISVIKGSRHINMDSQAPNKLVQEWMEKGNLFSGITLVKAESRYKNSRFDFYVETKEDKIFIEVKGVTLEENNIAMFPDAPTERGVRHIKELCDSLHDGYKAYIIFVIQMKDVDYFIPNETTHREFSDALKSAYRKGVNILALDCVVEEGFIEIEKQVEVRL</sequence>
<accession>B8I298</accession>
<comment type="similarity">
    <text evidence="1">Belongs to the SfsA family.</text>
</comment>
<reference key="1">
    <citation type="submission" date="2009-01" db="EMBL/GenBank/DDBJ databases">
        <title>Complete sequence of Clostridium cellulolyticum H10.</title>
        <authorList>
            <consortium name="US DOE Joint Genome Institute"/>
            <person name="Lucas S."/>
            <person name="Copeland A."/>
            <person name="Lapidus A."/>
            <person name="Glavina del Rio T."/>
            <person name="Dalin E."/>
            <person name="Tice H."/>
            <person name="Bruce D."/>
            <person name="Goodwin L."/>
            <person name="Pitluck S."/>
            <person name="Chertkov O."/>
            <person name="Saunders E."/>
            <person name="Brettin T."/>
            <person name="Detter J.C."/>
            <person name="Han C."/>
            <person name="Larimer F."/>
            <person name="Land M."/>
            <person name="Hauser L."/>
            <person name="Kyrpides N."/>
            <person name="Ivanova N."/>
            <person name="Zhou J."/>
            <person name="Richardson P."/>
        </authorList>
    </citation>
    <scope>NUCLEOTIDE SEQUENCE [LARGE SCALE GENOMIC DNA]</scope>
    <source>
        <strain>ATCC 35319 / DSM 5812 / JCM 6584 / H10</strain>
    </source>
</reference>
<keyword id="KW-1185">Reference proteome</keyword>
<proteinExistence type="inferred from homology"/>
<dbReference type="EMBL" id="CP001348">
    <property type="protein sequence ID" value="ACL77761.1"/>
    <property type="molecule type" value="Genomic_DNA"/>
</dbReference>
<dbReference type="RefSeq" id="WP_015926813.1">
    <property type="nucleotide sequence ID" value="NC_011898.1"/>
</dbReference>
<dbReference type="SMR" id="B8I298"/>
<dbReference type="STRING" id="394503.Ccel_3473"/>
<dbReference type="KEGG" id="cce:Ccel_3473"/>
<dbReference type="eggNOG" id="COG1489">
    <property type="taxonomic scope" value="Bacteria"/>
</dbReference>
<dbReference type="HOGENOM" id="CLU_052299_1_0_9"/>
<dbReference type="OrthoDB" id="9802365at2"/>
<dbReference type="Proteomes" id="UP000001349">
    <property type="component" value="Chromosome"/>
</dbReference>
<dbReference type="GO" id="GO:0003677">
    <property type="term" value="F:DNA binding"/>
    <property type="evidence" value="ECO:0007669"/>
    <property type="project" value="InterPro"/>
</dbReference>
<dbReference type="CDD" id="cd22359">
    <property type="entry name" value="SfsA-like_bacterial"/>
    <property type="match status" value="1"/>
</dbReference>
<dbReference type="Gene3D" id="2.40.50.580">
    <property type="match status" value="1"/>
</dbReference>
<dbReference type="Gene3D" id="3.40.1350.60">
    <property type="match status" value="1"/>
</dbReference>
<dbReference type="HAMAP" id="MF_00095">
    <property type="entry name" value="SfsA"/>
    <property type="match status" value="1"/>
</dbReference>
<dbReference type="InterPro" id="IPR005224">
    <property type="entry name" value="SfsA"/>
</dbReference>
<dbReference type="InterPro" id="IPR040452">
    <property type="entry name" value="SfsA_C"/>
</dbReference>
<dbReference type="InterPro" id="IPR041465">
    <property type="entry name" value="SfsA_N"/>
</dbReference>
<dbReference type="NCBIfam" id="TIGR00230">
    <property type="entry name" value="sfsA"/>
    <property type="match status" value="1"/>
</dbReference>
<dbReference type="PANTHER" id="PTHR30545">
    <property type="entry name" value="SUGAR FERMENTATION STIMULATION PROTEIN A"/>
    <property type="match status" value="1"/>
</dbReference>
<dbReference type="PANTHER" id="PTHR30545:SF2">
    <property type="entry name" value="SUGAR FERMENTATION STIMULATION PROTEIN A"/>
    <property type="match status" value="1"/>
</dbReference>
<dbReference type="Pfam" id="PF03749">
    <property type="entry name" value="SfsA"/>
    <property type="match status" value="1"/>
</dbReference>
<dbReference type="Pfam" id="PF17746">
    <property type="entry name" value="SfsA_N"/>
    <property type="match status" value="1"/>
</dbReference>
<protein>
    <recommendedName>
        <fullName evidence="1">Sugar fermentation stimulation protein homolog</fullName>
    </recommendedName>
</protein>
<name>SFSA_RUMCH</name>